<comment type="function">
    <text evidence="1">Fluoride-specific ion channel. Important for reducing fluoride concentration in the cell, thus reducing its toxicity.</text>
</comment>
<comment type="catalytic activity">
    <reaction evidence="1">
        <text>fluoride(in) = fluoride(out)</text>
        <dbReference type="Rhea" id="RHEA:76159"/>
        <dbReference type="ChEBI" id="CHEBI:17051"/>
    </reaction>
    <physiologicalReaction direction="left-to-right" evidence="1">
        <dbReference type="Rhea" id="RHEA:76160"/>
    </physiologicalReaction>
</comment>
<comment type="activity regulation">
    <text evidence="1">Na(+) is not transported, but it plays an essential structural role and its presence is essential for fluoride channel function.</text>
</comment>
<comment type="subcellular location">
    <subcellularLocation>
        <location evidence="1">Cell membrane</location>
        <topology evidence="1">Multi-pass membrane protein</topology>
    </subcellularLocation>
</comment>
<comment type="similarity">
    <text evidence="1">Belongs to the fluoride channel Fluc/FEX (TC 1.A.43) family.</text>
</comment>
<evidence type="ECO:0000255" key="1">
    <source>
        <dbReference type="HAMAP-Rule" id="MF_00454"/>
    </source>
</evidence>
<organism>
    <name type="scientific">Mycobacterium tuberculosis (strain CDC 1551 / Oshkosh)</name>
    <dbReference type="NCBI Taxonomy" id="83331"/>
    <lineage>
        <taxon>Bacteria</taxon>
        <taxon>Bacillati</taxon>
        <taxon>Actinomycetota</taxon>
        <taxon>Actinomycetes</taxon>
        <taxon>Mycobacteriales</taxon>
        <taxon>Mycobacteriaceae</taxon>
        <taxon>Mycobacterium</taxon>
        <taxon>Mycobacterium tuberculosis complex</taxon>
    </lineage>
</organism>
<dbReference type="EMBL" id="AE000516">
    <property type="protein sequence ID" value="AAK47489.1"/>
    <property type="molecule type" value="Genomic_DNA"/>
</dbReference>
<dbReference type="PIR" id="F70650">
    <property type="entry name" value="F70650"/>
</dbReference>
<dbReference type="SMR" id="P9WP62"/>
<dbReference type="KEGG" id="mtc:MT3153.1"/>
<dbReference type="PATRIC" id="fig|83331.31.peg.3399"/>
<dbReference type="HOGENOM" id="CLU_114342_2_3_11"/>
<dbReference type="Proteomes" id="UP000001020">
    <property type="component" value="Chromosome"/>
</dbReference>
<dbReference type="GO" id="GO:0005886">
    <property type="term" value="C:plasma membrane"/>
    <property type="evidence" value="ECO:0007669"/>
    <property type="project" value="UniProtKB-SubCell"/>
</dbReference>
<dbReference type="GO" id="GO:0062054">
    <property type="term" value="F:fluoride channel activity"/>
    <property type="evidence" value="ECO:0007669"/>
    <property type="project" value="UniProtKB-UniRule"/>
</dbReference>
<dbReference type="GO" id="GO:0046872">
    <property type="term" value="F:metal ion binding"/>
    <property type="evidence" value="ECO:0007669"/>
    <property type="project" value="UniProtKB-KW"/>
</dbReference>
<dbReference type="GO" id="GO:0140114">
    <property type="term" value="P:cellular detoxification of fluoride"/>
    <property type="evidence" value="ECO:0007669"/>
    <property type="project" value="UniProtKB-UniRule"/>
</dbReference>
<dbReference type="HAMAP" id="MF_00454">
    <property type="entry name" value="FluC"/>
    <property type="match status" value="1"/>
</dbReference>
<dbReference type="InterPro" id="IPR003691">
    <property type="entry name" value="FluC"/>
</dbReference>
<dbReference type="NCBIfam" id="NF010812">
    <property type="entry name" value="PRK14216.1"/>
    <property type="match status" value="1"/>
</dbReference>
<dbReference type="PANTHER" id="PTHR28259">
    <property type="entry name" value="FLUORIDE EXPORT PROTEIN 1-RELATED"/>
    <property type="match status" value="1"/>
</dbReference>
<dbReference type="PANTHER" id="PTHR28259:SF1">
    <property type="entry name" value="FLUORIDE EXPORT PROTEIN 1-RELATED"/>
    <property type="match status" value="1"/>
</dbReference>
<dbReference type="Pfam" id="PF02537">
    <property type="entry name" value="CRCB"/>
    <property type="match status" value="1"/>
</dbReference>
<keyword id="KW-1003">Cell membrane</keyword>
<keyword id="KW-0407">Ion channel</keyword>
<keyword id="KW-0406">Ion transport</keyword>
<keyword id="KW-0472">Membrane</keyword>
<keyword id="KW-0479">Metal-binding</keyword>
<keyword id="KW-1185">Reference proteome</keyword>
<keyword id="KW-0915">Sodium</keyword>
<keyword id="KW-0812">Transmembrane</keyword>
<keyword id="KW-1133">Transmembrane helix</keyword>
<keyword id="KW-0813">Transport</keyword>
<accession>P9WP62</accession>
<accession>L0TEG1</accession>
<accession>P63862</accession>
<accession>P95089</accession>
<feature type="chain" id="PRO_0000427007" description="Fluoride-specific ion channel FluC 1">
    <location>
        <begin position="1"/>
        <end position="132"/>
    </location>
</feature>
<feature type="transmembrane region" description="Helical" evidence="1">
    <location>
        <begin position="11"/>
        <end position="31"/>
    </location>
</feature>
<feature type="transmembrane region" description="Helical" evidence="1">
    <location>
        <begin position="37"/>
        <end position="57"/>
    </location>
</feature>
<feature type="transmembrane region" description="Helical" evidence="1">
    <location>
        <begin position="70"/>
        <end position="92"/>
    </location>
</feature>
<feature type="transmembrane region" description="Helical" evidence="1">
    <location>
        <begin position="105"/>
        <end position="125"/>
    </location>
</feature>
<feature type="binding site" evidence="1">
    <location>
        <position position="79"/>
    </location>
    <ligand>
        <name>Na(+)</name>
        <dbReference type="ChEBI" id="CHEBI:29101"/>
        <note>structural</note>
    </ligand>
</feature>
<feature type="binding site" evidence="1">
    <location>
        <position position="82"/>
    </location>
    <ligand>
        <name>Na(+)</name>
        <dbReference type="ChEBI" id="CHEBI:29101"/>
        <note>structural</note>
    </ligand>
</feature>
<sequence length="132" mass="14301">MPNHDYRELAAVFAGGALGALARAALSALAIPDPARWPWPTFTVNVVGAFLVGYFTTRLLERLPLSSYRRPLLGTGLCGGLTTFSTMQVETISMIEHGHWGLAAAYSVVSITLGLLAVHLATVLVRRVRIRR</sequence>
<name>FLUC1_MYCTO</name>
<protein>
    <recommendedName>
        <fullName evidence="1">Fluoride-specific ion channel FluC 1</fullName>
    </recommendedName>
</protein>
<gene>
    <name evidence="1" type="primary">fluC1</name>
    <name evidence="1" type="synonym">crcB1</name>
    <name type="ordered locus">MT3153.1</name>
</gene>
<reference key="1">
    <citation type="journal article" date="2002" name="J. Bacteriol.">
        <title>Whole-genome comparison of Mycobacterium tuberculosis clinical and laboratory strains.</title>
        <authorList>
            <person name="Fleischmann R.D."/>
            <person name="Alland D."/>
            <person name="Eisen J.A."/>
            <person name="Carpenter L."/>
            <person name="White O."/>
            <person name="Peterson J.D."/>
            <person name="DeBoy R.T."/>
            <person name="Dodson R.J."/>
            <person name="Gwinn M.L."/>
            <person name="Haft D.H."/>
            <person name="Hickey E.K."/>
            <person name="Kolonay J.F."/>
            <person name="Nelson W.C."/>
            <person name="Umayam L.A."/>
            <person name="Ermolaeva M.D."/>
            <person name="Salzberg S.L."/>
            <person name="Delcher A."/>
            <person name="Utterback T.R."/>
            <person name="Weidman J.F."/>
            <person name="Khouri H.M."/>
            <person name="Gill J."/>
            <person name="Mikula A."/>
            <person name="Bishai W."/>
            <person name="Jacobs W.R. Jr."/>
            <person name="Venter J.C."/>
            <person name="Fraser C.M."/>
        </authorList>
    </citation>
    <scope>NUCLEOTIDE SEQUENCE [LARGE SCALE GENOMIC DNA]</scope>
    <source>
        <strain>CDC 1551 / Oshkosh</strain>
    </source>
</reference>
<proteinExistence type="inferred from homology"/>